<reference key="1">
    <citation type="journal article" date="2003" name="Proc. Natl. Acad. Sci. U.S.A.">
        <title>The genome sequence of Blochmannia floridanus: comparative analysis of reduced genomes.</title>
        <authorList>
            <person name="Gil R."/>
            <person name="Silva F.J."/>
            <person name="Zientz E."/>
            <person name="Delmotte F."/>
            <person name="Gonzalez-Candelas F."/>
            <person name="Latorre A."/>
            <person name="Rausell C."/>
            <person name="Kamerbeek J."/>
            <person name="Gadau J."/>
            <person name="Hoelldobler B."/>
            <person name="van Ham R.C.H.J."/>
            <person name="Gross R."/>
            <person name="Moya A."/>
        </authorList>
    </citation>
    <scope>NUCLEOTIDE SEQUENCE [LARGE SCALE GENOMIC DNA]</scope>
</reference>
<keyword id="KW-1185">Reference proteome</keyword>
<keyword id="KW-0687">Ribonucleoprotein</keyword>
<keyword id="KW-0689">Ribosomal protein</keyword>
<name>RL7_BLOFL</name>
<comment type="function">
    <text evidence="1">Forms part of the ribosomal stalk which helps the ribosome interact with GTP-bound translation factors. Is thus essential for accurate translation.</text>
</comment>
<comment type="subunit">
    <text evidence="1">Homodimer. Part of the ribosomal stalk of the 50S ribosomal subunit. Forms a multimeric L10(L12)X complex, where L10 forms an elongated spine to which 2 to 4 L12 dimers bind in a sequential fashion. Binds GTP-bound translation factors.</text>
</comment>
<comment type="similarity">
    <text evidence="1">Belongs to the bacterial ribosomal protein bL12 family.</text>
</comment>
<sequence>MSLKKEEVLDAISEMSVMDIMQLISMIEKKFGVSAASSHISSVENVVTESESTQVEQTEFTVILSSIGGNKIPVIKAVRSITGLGLKEAKDLVESAPVTLKESVSKDDADNLKKTLESVGASVEIK</sequence>
<proteinExistence type="inferred from homology"/>
<evidence type="ECO:0000255" key="1">
    <source>
        <dbReference type="HAMAP-Rule" id="MF_00368"/>
    </source>
</evidence>
<evidence type="ECO:0000305" key="2"/>
<organism>
    <name type="scientific">Blochmanniella floridana</name>
    <dbReference type="NCBI Taxonomy" id="203907"/>
    <lineage>
        <taxon>Bacteria</taxon>
        <taxon>Pseudomonadati</taxon>
        <taxon>Pseudomonadota</taxon>
        <taxon>Gammaproteobacteria</taxon>
        <taxon>Enterobacterales</taxon>
        <taxon>Enterobacteriaceae</taxon>
        <taxon>ant endosymbionts</taxon>
        <taxon>Candidatus Blochmanniella</taxon>
    </lineage>
</organism>
<accession>Q7VRP6</accession>
<feature type="chain" id="PRO_0000243392" description="Large ribosomal subunit protein bL12">
    <location>
        <begin position="1"/>
        <end position="126"/>
    </location>
</feature>
<protein>
    <recommendedName>
        <fullName evidence="1">Large ribosomal subunit protein bL12</fullName>
    </recommendedName>
    <alternativeName>
        <fullName evidence="2">50S ribosomal protein L7/L12</fullName>
    </alternativeName>
</protein>
<dbReference type="EMBL" id="BX248583">
    <property type="protein sequence ID" value="CAD83240.1"/>
    <property type="molecule type" value="Genomic_DNA"/>
</dbReference>
<dbReference type="SMR" id="Q7VRP6"/>
<dbReference type="STRING" id="203907.Bfl558"/>
<dbReference type="KEGG" id="bfl:Bfl558"/>
<dbReference type="eggNOG" id="COG0222">
    <property type="taxonomic scope" value="Bacteria"/>
</dbReference>
<dbReference type="HOGENOM" id="CLU_086499_3_2_6"/>
<dbReference type="OrthoDB" id="9811748at2"/>
<dbReference type="Proteomes" id="UP000002192">
    <property type="component" value="Chromosome"/>
</dbReference>
<dbReference type="GO" id="GO:0022625">
    <property type="term" value="C:cytosolic large ribosomal subunit"/>
    <property type="evidence" value="ECO:0007669"/>
    <property type="project" value="TreeGrafter"/>
</dbReference>
<dbReference type="GO" id="GO:0003729">
    <property type="term" value="F:mRNA binding"/>
    <property type="evidence" value="ECO:0007669"/>
    <property type="project" value="TreeGrafter"/>
</dbReference>
<dbReference type="GO" id="GO:0003735">
    <property type="term" value="F:structural constituent of ribosome"/>
    <property type="evidence" value="ECO:0007669"/>
    <property type="project" value="InterPro"/>
</dbReference>
<dbReference type="GO" id="GO:0006412">
    <property type="term" value="P:translation"/>
    <property type="evidence" value="ECO:0007669"/>
    <property type="project" value="UniProtKB-UniRule"/>
</dbReference>
<dbReference type="CDD" id="cd00387">
    <property type="entry name" value="Ribosomal_L7_L12"/>
    <property type="match status" value="1"/>
</dbReference>
<dbReference type="FunFam" id="3.30.1390.10:FF:000001">
    <property type="entry name" value="50S ribosomal protein L7/L12"/>
    <property type="match status" value="1"/>
</dbReference>
<dbReference type="Gene3D" id="3.30.1390.10">
    <property type="match status" value="1"/>
</dbReference>
<dbReference type="Gene3D" id="1.20.5.710">
    <property type="entry name" value="Single helix bin"/>
    <property type="match status" value="1"/>
</dbReference>
<dbReference type="HAMAP" id="MF_00368">
    <property type="entry name" value="Ribosomal_bL12"/>
    <property type="match status" value="1"/>
</dbReference>
<dbReference type="InterPro" id="IPR000206">
    <property type="entry name" value="Ribosomal_bL12"/>
</dbReference>
<dbReference type="InterPro" id="IPR013823">
    <property type="entry name" value="Ribosomal_bL12_C"/>
</dbReference>
<dbReference type="InterPro" id="IPR014719">
    <property type="entry name" value="Ribosomal_bL12_C/ClpS-like"/>
</dbReference>
<dbReference type="InterPro" id="IPR008932">
    <property type="entry name" value="Ribosomal_bL12_oligo"/>
</dbReference>
<dbReference type="InterPro" id="IPR036235">
    <property type="entry name" value="Ribosomal_bL12_oligo_N_sf"/>
</dbReference>
<dbReference type="NCBIfam" id="TIGR00855">
    <property type="entry name" value="L12"/>
    <property type="match status" value="1"/>
</dbReference>
<dbReference type="PANTHER" id="PTHR45987">
    <property type="entry name" value="39S RIBOSOMAL PROTEIN L12"/>
    <property type="match status" value="1"/>
</dbReference>
<dbReference type="PANTHER" id="PTHR45987:SF4">
    <property type="entry name" value="LARGE RIBOSOMAL SUBUNIT PROTEIN BL12M"/>
    <property type="match status" value="1"/>
</dbReference>
<dbReference type="Pfam" id="PF00542">
    <property type="entry name" value="Ribosomal_L12"/>
    <property type="match status" value="1"/>
</dbReference>
<dbReference type="Pfam" id="PF16320">
    <property type="entry name" value="Ribosomal_L12_N"/>
    <property type="match status" value="1"/>
</dbReference>
<dbReference type="SUPFAM" id="SSF54736">
    <property type="entry name" value="ClpS-like"/>
    <property type="match status" value="1"/>
</dbReference>
<dbReference type="SUPFAM" id="SSF48300">
    <property type="entry name" value="Ribosomal protein L7/12, oligomerisation (N-terminal) domain"/>
    <property type="match status" value="1"/>
</dbReference>
<gene>
    <name evidence="1" type="primary">rplL</name>
    <name type="ordered locus">Bfl558</name>
</gene>